<sequence>MSIFNYLRRRASTASVAKERLQIIISHERSQRNTPDYLPKLQEEILAVIAKYVNISRDQVSVNLERMEDSAVLELNITMPDKALEDSNS</sequence>
<reference key="1">
    <citation type="journal article" date="2004" name="Nat. Genet.">
        <title>Evidence in the Legionella pneumophila genome for exploitation of host cell functions and high genome plasticity.</title>
        <authorList>
            <person name="Cazalet C."/>
            <person name="Rusniok C."/>
            <person name="Brueggemann H."/>
            <person name="Zidane N."/>
            <person name="Magnier A."/>
            <person name="Ma L."/>
            <person name="Tichit M."/>
            <person name="Jarraud S."/>
            <person name="Bouchier C."/>
            <person name="Vandenesch F."/>
            <person name="Kunst F."/>
            <person name="Etienne J."/>
            <person name="Glaser P."/>
            <person name="Buchrieser C."/>
        </authorList>
    </citation>
    <scope>NUCLEOTIDE SEQUENCE [LARGE SCALE GENOMIC DNA]</scope>
    <source>
        <strain>Lens</strain>
    </source>
</reference>
<accession>Q5WVX1</accession>
<evidence type="ECO:0000255" key="1">
    <source>
        <dbReference type="HAMAP-Rule" id="MF_00262"/>
    </source>
</evidence>
<gene>
    <name evidence="1" type="primary">minE</name>
    <name type="ordered locus">lpl1689</name>
</gene>
<organism>
    <name type="scientific">Legionella pneumophila (strain Lens)</name>
    <dbReference type="NCBI Taxonomy" id="297245"/>
    <lineage>
        <taxon>Bacteria</taxon>
        <taxon>Pseudomonadati</taxon>
        <taxon>Pseudomonadota</taxon>
        <taxon>Gammaproteobacteria</taxon>
        <taxon>Legionellales</taxon>
        <taxon>Legionellaceae</taxon>
        <taxon>Legionella</taxon>
    </lineage>
</organism>
<proteinExistence type="inferred from homology"/>
<protein>
    <recommendedName>
        <fullName evidence="1">Cell division topological specificity factor</fullName>
    </recommendedName>
</protein>
<feature type="chain" id="PRO_0000298130" description="Cell division topological specificity factor">
    <location>
        <begin position="1"/>
        <end position="89"/>
    </location>
</feature>
<name>MINE_LEGPL</name>
<dbReference type="EMBL" id="CR628337">
    <property type="protein sequence ID" value="CAH15929.1"/>
    <property type="molecule type" value="Genomic_DNA"/>
</dbReference>
<dbReference type="RefSeq" id="WP_011213993.1">
    <property type="nucleotide sequence ID" value="NC_006369.1"/>
</dbReference>
<dbReference type="SMR" id="Q5WVX1"/>
<dbReference type="GeneID" id="57035714"/>
<dbReference type="KEGG" id="lpf:lpl1689"/>
<dbReference type="LegioList" id="lpl1689"/>
<dbReference type="HOGENOM" id="CLU_137929_2_1_6"/>
<dbReference type="Proteomes" id="UP000002517">
    <property type="component" value="Chromosome"/>
</dbReference>
<dbReference type="GO" id="GO:0051301">
    <property type="term" value="P:cell division"/>
    <property type="evidence" value="ECO:0007669"/>
    <property type="project" value="UniProtKB-KW"/>
</dbReference>
<dbReference type="GO" id="GO:0032955">
    <property type="term" value="P:regulation of division septum assembly"/>
    <property type="evidence" value="ECO:0007669"/>
    <property type="project" value="InterPro"/>
</dbReference>
<dbReference type="FunFam" id="3.30.1070.10:FF:000001">
    <property type="entry name" value="Cell division topological specificity factor"/>
    <property type="match status" value="1"/>
</dbReference>
<dbReference type="Gene3D" id="3.30.1070.10">
    <property type="entry name" value="Cell division topological specificity factor MinE"/>
    <property type="match status" value="1"/>
</dbReference>
<dbReference type="HAMAP" id="MF_00262">
    <property type="entry name" value="MinE"/>
    <property type="match status" value="1"/>
</dbReference>
<dbReference type="InterPro" id="IPR005527">
    <property type="entry name" value="MinE"/>
</dbReference>
<dbReference type="InterPro" id="IPR036707">
    <property type="entry name" value="MinE_sf"/>
</dbReference>
<dbReference type="NCBIfam" id="TIGR01215">
    <property type="entry name" value="minE"/>
    <property type="match status" value="1"/>
</dbReference>
<dbReference type="NCBIfam" id="NF001422">
    <property type="entry name" value="PRK00296.1"/>
    <property type="match status" value="1"/>
</dbReference>
<dbReference type="Pfam" id="PF03776">
    <property type="entry name" value="MinE"/>
    <property type="match status" value="1"/>
</dbReference>
<dbReference type="SUPFAM" id="SSF55229">
    <property type="entry name" value="Cell division protein MinE topological specificity domain"/>
    <property type="match status" value="1"/>
</dbReference>
<keyword id="KW-0131">Cell cycle</keyword>
<keyword id="KW-0132">Cell division</keyword>
<comment type="function">
    <text evidence="1">Prevents the cell division inhibition by proteins MinC and MinD at internal division sites while permitting inhibition at polar sites. This ensures cell division at the proper site by restricting the formation of a division septum at the midpoint of the long axis of the cell.</text>
</comment>
<comment type="similarity">
    <text evidence="1">Belongs to the MinE family.</text>
</comment>